<proteinExistence type="inferred from homology"/>
<dbReference type="EMBL" id="CT978603">
    <property type="protein sequence ID" value="CAK29241.1"/>
    <property type="molecule type" value="Genomic_DNA"/>
</dbReference>
<dbReference type="SMR" id="A5GWI2"/>
<dbReference type="STRING" id="316278.SynRCC307_2338"/>
<dbReference type="KEGG" id="syr:SynRCC307_2338"/>
<dbReference type="eggNOG" id="ENOG50332MV">
    <property type="taxonomic scope" value="Bacteria"/>
</dbReference>
<dbReference type="HOGENOM" id="CLU_190203_0_0_3"/>
<dbReference type="OrthoDB" id="427121at2"/>
<dbReference type="Proteomes" id="UP000001115">
    <property type="component" value="Chromosome"/>
</dbReference>
<dbReference type="GO" id="GO:0009523">
    <property type="term" value="C:photosystem II"/>
    <property type="evidence" value="ECO:0007669"/>
    <property type="project" value="UniProtKB-KW"/>
</dbReference>
<dbReference type="GO" id="GO:0031676">
    <property type="term" value="C:plasma membrane-derived thylakoid membrane"/>
    <property type="evidence" value="ECO:0007669"/>
    <property type="project" value="UniProtKB-SubCell"/>
</dbReference>
<dbReference type="GO" id="GO:0042301">
    <property type="term" value="F:phosphate ion binding"/>
    <property type="evidence" value="ECO:0007669"/>
    <property type="project" value="InterPro"/>
</dbReference>
<dbReference type="GO" id="GO:0015979">
    <property type="term" value="P:photosynthesis"/>
    <property type="evidence" value="ECO:0007669"/>
    <property type="project" value="UniProtKB-UniRule"/>
</dbReference>
<dbReference type="GO" id="GO:0050821">
    <property type="term" value="P:protein stabilization"/>
    <property type="evidence" value="ECO:0007669"/>
    <property type="project" value="InterPro"/>
</dbReference>
<dbReference type="Gene3D" id="1.20.5.880">
    <property type="entry name" value="Photosystem II reaction center protein H"/>
    <property type="match status" value="1"/>
</dbReference>
<dbReference type="HAMAP" id="MF_00752">
    <property type="entry name" value="PSII_PsbH"/>
    <property type="match status" value="1"/>
</dbReference>
<dbReference type="InterPro" id="IPR001056">
    <property type="entry name" value="PSII_PsbH"/>
</dbReference>
<dbReference type="InterPro" id="IPR036863">
    <property type="entry name" value="PSII_PsbH_sf"/>
</dbReference>
<dbReference type="NCBIfam" id="NF002728">
    <property type="entry name" value="PRK02624.1"/>
    <property type="match status" value="1"/>
</dbReference>
<dbReference type="PANTHER" id="PTHR34469">
    <property type="entry name" value="PHOTOSYSTEM II REACTION CENTER PROTEIN H"/>
    <property type="match status" value="1"/>
</dbReference>
<dbReference type="PANTHER" id="PTHR34469:SF4">
    <property type="entry name" value="PHOTOSYSTEM II REACTION CENTER PROTEIN H"/>
    <property type="match status" value="1"/>
</dbReference>
<dbReference type="Pfam" id="PF00737">
    <property type="entry name" value="PsbH"/>
    <property type="match status" value="1"/>
</dbReference>
<dbReference type="SUPFAM" id="SSF161025">
    <property type="entry name" value="Photosystem II 10 kDa phosphoprotein PsbH"/>
    <property type="match status" value="1"/>
</dbReference>
<organism>
    <name type="scientific">Synechococcus sp. (strain RCC307)</name>
    <dbReference type="NCBI Taxonomy" id="316278"/>
    <lineage>
        <taxon>Bacteria</taxon>
        <taxon>Bacillati</taxon>
        <taxon>Cyanobacteriota</taxon>
        <taxon>Cyanophyceae</taxon>
        <taxon>Synechococcales</taxon>
        <taxon>Synechococcaceae</taxon>
        <taxon>Synechococcus</taxon>
    </lineage>
</organism>
<keyword id="KW-0472">Membrane</keyword>
<keyword id="KW-0602">Photosynthesis</keyword>
<keyword id="KW-0604">Photosystem II</keyword>
<keyword id="KW-1185">Reference proteome</keyword>
<keyword id="KW-0793">Thylakoid</keyword>
<keyword id="KW-0812">Transmembrane</keyword>
<keyword id="KW-1133">Transmembrane helix</keyword>
<evidence type="ECO:0000255" key="1">
    <source>
        <dbReference type="HAMAP-Rule" id="MF_00752"/>
    </source>
</evidence>
<reference key="1">
    <citation type="submission" date="2006-05" db="EMBL/GenBank/DDBJ databases">
        <authorList>
            <consortium name="Genoscope"/>
        </authorList>
    </citation>
    <scope>NUCLEOTIDE SEQUENCE [LARGE SCALE GENOMIC DNA]</scope>
    <source>
        <strain>RCC307</strain>
    </source>
</reference>
<protein>
    <recommendedName>
        <fullName evidence="1">Photosystem II reaction center protein H</fullName>
        <shortName evidence="1">PSII-H</shortName>
    </recommendedName>
</protein>
<sequence length="66" mass="7364">MAQRTRLGDLLRPLNSEYGKVVPGWGTTPVMGIFMALFLVFLLVILQLYNRSLLLDGITVNWNGLG</sequence>
<comment type="function">
    <text evidence="1">One of the components of the core complex of photosystem II (PSII), required for its stability and/or assembly. PSII is a light-driven water:plastoquinone oxidoreductase that uses light energy to abstract electrons from H(2)O, generating O(2) and a proton gradient subsequently used for ATP formation. It consists of a core antenna complex that captures photons, and an electron transfer chain that converts photonic excitation into a charge separation.</text>
</comment>
<comment type="subunit">
    <text evidence="1">PSII is composed of 1 copy each of membrane proteins PsbA, PsbB, PsbC, PsbD, PsbE, PsbF, PsbH, PsbI, PsbJ, PsbK, PsbL, PsbM, PsbT, PsbX, PsbY, PsbZ, Psb30/Ycf12, peripheral proteins PsbO, CyanoQ (PsbQ), PsbU, PsbV and a large number of cofactors. It forms dimeric complexes.</text>
</comment>
<comment type="subcellular location">
    <subcellularLocation>
        <location evidence="1">Cellular thylakoid membrane</location>
        <topology evidence="1">Single-pass membrane protein</topology>
    </subcellularLocation>
</comment>
<comment type="similarity">
    <text evidence="1">Belongs to the PsbH family.</text>
</comment>
<name>PSBH_SYNR3</name>
<feature type="chain" id="PRO_1000046596" description="Photosystem II reaction center protein H">
    <location>
        <begin position="1"/>
        <end position="66"/>
    </location>
</feature>
<feature type="transmembrane region" description="Helical" evidence="1">
    <location>
        <begin position="29"/>
        <end position="49"/>
    </location>
</feature>
<accession>A5GWI2</accession>
<gene>
    <name evidence="1" type="primary">psbH</name>
    <name type="ordered locus">SynRCC307_2338</name>
</gene>